<sequence length="388" mass="41379">MNLHEYQAKQLFARYGLPAPVGYACTTPREAEEAASKIGAGPWVVKCQVHAGGRGKAGGVKVVNSKEDIRAFAENWLGKRLVTYQTDANGQPVNQILVEAATDIAKELYLGAVVDRSSRRVVFMASTEGGVEIEKVAEETPHLIHKVALDPLTGPMPYQGRELAFKLGLEGKLVQQFTKIFMGLATIFLERDLALIEINPLVITKQGDLICLDGKLGADGNALFRQPDLREMRDQSQEDPREAQAAQWELNYVALDGNIGCMVNGAGLAMGTMDIVKLHGGEPANFLDVGGGATKERVTEAFKIILSDDKVKAVLVNIFGGIVRCDLIADGIIGAVAEVGVNVPVVVRLEGNNAEVGAKKLADSGLNIIAAKGLTDAAQQVVAAVEGK</sequence>
<gene>
    <name evidence="1" type="primary">sucC</name>
    <name type="ordered locus">ECIAI1_0701</name>
</gene>
<dbReference type="EC" id="6.2.1.5" evidence="1"/>
<dbReference type="EMBL" id="CU928160">
    <property type="protein sequence ID" value="CAQ97569.1"/>
    <property type="molecule type" value="Genomic_DNA"/>
</dbReference>
<dbReference type="RefSeq" id="WP_001048604.1">
    <property type="nucleotide sequence ID" value="NC_011741.1"/>
</dbReference>
<dbReference type="SMR" id="B7M5P1"/>
<dbReference type="KEGG" id="ecr:ECIAI1_0701"/>
<dbReference type="HOGENOM" id="CLU_037430_4_0_6"/>
<dbReference type="UniPathway" id="UPA00223">
    <property type="reaction ID" value="UER00999"/>
</dbReference>
<dbReference type="GO" id="GO:0005829">
    <property type="term" value="C:cytosol"/>
    <property type="evidence" value="ECO:0007669"/>
    <property type="project" value="TreeGrafter"/>
</dbReference>
<dbReference type="GO" id="GO:0042709">
    <property type="term" value="C:succinate-CoA ligase complex"/>
    <property type="evidence" value="ECO:0007669"/>
    <property type="project" value="TreeGrafter"/>
</dbReference>
<dbReference type="GO" id="GO:0005524">
    <property type="term" value="F:ATP binding"/>
    <property type="evidence" value="ECO:0007669"/>
    <property type="project" value="UniProtKB-UniRule"/>
</dbReference>
<dbReference type="GO" id="GO:0000287">
    <property type="term" value="F:magnesium ion binding"/>
    <property type="evidence" value="ECO:0007669"/>
    <property type="project" value="UniProtKB-UniRule"/>
</dbReference>
<dbReference type="GO" id="GO:0004775">
    <property type="term" value="F:succinate-CoA ligase (ADP-forming) activity"/>
    <property type="evidence" value="ECO:0007669"/>
    <property type="project" value="UniProtKB-UniRule"/>
</dbReference>
<dbReference type="GO" id="GO:0004776">
    <property type="term" value="F:succinate-CoA ligase (GDP-forming) activity"/>
    <property type="evidence" value="ECO:0007669"/>
    <property type="project" value="RHEA"/>
</dbReference>
<dbReference type="GO" id="GO:0006104">
    <property type="term" value="P:succinyl-CoA metabolic process"/>
    <property type="evidence" value="ECO:0007669"/>
    <property type="project" value="TreeGrafter"/>
</dbReference>
<dbReference type="GO" id="GO:0006099">
    <property type="term" value="P:tricarboxylic acid cycle"/>
    <property type="evidence" value="ECO:0007669"/>
    <property type="project" value="UniProtKB-UniRule"/>
</dbReference>
<dbReference type="FunFam" id="3.30.1490.20:FF:000002">
    <property type="entry name" value="Succinate--CoA ligase [ADP-forming] subunit beta"/>
    <property type="match status" value="1"/>
</dbReference>
<dbReference type="FunFam" id="3.30.470.20:FF:000002">
    <property type="entry name" value="Succinate--CoA ligase [ADP-forming] subunit beta"/>
    <property type="match status" value="1"/>
</dbReference>
<dbReference type="FunFam" id="3.40.50.261:FF:000001">
    <property type="entry name" value="Succinate--CoA ligase [ADP-forming] subunit beta"/>
    <property type="match status" value="1"/>
</dbReference>
<dbReference type="Gene3D" id="3.30.1490.20">
    <property type="entry name" value="ATP-grasp fold, A domain"/>
    <property type="match status" value="1"/>
</dbReference>
<dbReference type="Gene3D" id="3.30.470.20">
    <property type="entry name" value="ATP-grasp fold, B domain"/>
    <property type="match status" value="1"/>
</dbReference>
<dbReference type="Gene3D" id="3.40.50.261">
    <property type="entry name" value="Succinyl-CoA synthetase domains"/>
    <property type="match status" value="1"/>
</dbReference>
<dbReference type="HAMAP" id="MF_00558">
    <property type="entry name" value="Succ_CoA_beta"/>
    <property type="match status" value="1"/>
</dbReference>
<dbReference type="InterPro" id="IPR011761">
    <property type="entry name" value="ATP-grasp"/>
</dbReference>
<dbReference type="InterPro" id="IPR013650">
    <property type="entry name" value="ATP-grasp_succ-CoA_synth-type"/>
</dbReference>
<dbReference type="InterPro" id="IPR013815">
    <property type="entry name" value="ATP_grasp_subdomain_1"/>
</dbReference>
<dbReference type="InterPro" id="IPR017866">
    <property type="entry name" value="Succ-CoA_synthase_bsu_CS"/>
</dbReference>
<dbReference type="InterPro" id="IPR005811">
    <property type="entry name" value="SUCC_ACL_C"/>
</dbReference>
<dbReference type="InterPro" id="IPR005809">
    <property type="entry name" value="Succ_CoA_ligase-like_bsu"/>
</dbReference>
<dbReference type="InterPro" id="IPR016102">
    <property type="entry name" value="Succinyl-CoA_synth-like"/>
</dbReference>
<dbReference type="NCBIfam" id="NF001913">
    <property type="entry name" value="PRK00696.1"/>
    <property type="match status" value="1"/>
</dbReference>
<dbReference type="NCBIfam" id="TIGR01016">
    <property type="entry name" value="sucCoAbeta"/>
    <property type="match status" value="1"/>
</dbReference>
<dbReference type="PANTHER" id="PTHR11815:SF10">
    <property type="entry name" value="SUCCINATE--COA LIGASE [GDP-FORMING] SUBUNIT BETA, MITOCHONDRIAL"/>
    <property type="match status" value="1"/>
</dbReference>
<dbReference type="PANTHER" id="PTHR11815">
    <property type="entry name" value="SUCCINYL-COA SYNTHETASE BETA CHAIN"/>
    <property type="match status" value="1"/>
</dbReference>
<dbReference type="Pfam" id="PF08442">
    <property type="entry name" value="ATP-grasp_2"/>
    <property type="match status" value="1"/>
</dbReference>
<dbReference type="Pfam" id="PF00549">
    <property type="entry name" value="Ligase_CoA"/>
    <property type="match status" value="1"/>
</dbReference>
<dbReference type="PIRSF" id="PIRSF001554">
    <property type="entry name" value="SucCS_beta"/>
    <property type="match status" value="1"/>
</dbReference>
<dbReference type="SUPFAM" id="SSF56059">
    <property type="entry name" value="Glutathione synthetase ATP-binding domain-like"/>
    <property type="match status" value="1"/>
</dbReference>
<dbReference type="SUPFAM" id="SSF52210">
    <property type="entry name" value="Succinyl-CoA synthetase domains"/>
    <property type="match status" value="1"/>
</dbReference>
<dbReference type="PROSITE" id="PS50975">
    <property type="entry name" value="ATP_GRASP"/>
    <property type="match status" value="1"/>
</dbReference>
<dbReference type="PROSITE" id="PS01217">
    <property type="entry name" value="SUCCINYL_COA_LIG_3"/>
    <property type="match status" value="1"/>
</dbReference>
<organism>
    <name type="scientific">Escherichia coli O8 (strain IAI1)</name>
    <dbReference type="NCBI Taxonomy" id="585034"/>
    <lineage>
        <taxon>Bacteria</taxon>
        <taxon>Pseudomonadati</taxon>
        <taxon>Pseudomonadota</taxon>
        <taxon>Gammaproteobacteria</taxon>
        <taxon>Enterobacterales</taxon>
        <taxon>Enterobacteriaceae</taxon>
        <taxon>Escherichia</taxon>
    </lineage>
</organism>
<proteinExistence type="inferred from homology"/>
<comment type="function">
    <text evidence="1">Succinyl-CoA synthetase functions in the citric acid cycle (TCA), coupling the hydrolysis of succinyl-CoA to the synthesis of either ATP or GTP and thus represents the only step of substrate-level phosphorylation in the TCA. The beta subunit provides nucleotide specificity of the enzyme and binds the substrate succinate, while the binding sites for coenzyme A and phosphate are found in the alpha subunit.</text>
</comment>
<comment type="catalytic activity">
    <reaction evidence="1">
        <text>succinate + ATP + CoA = succinyl-CoA + ADP + phosphate</text>
        <dbReference type="Rhea" id="RHEA:17661"/>
        <dbReference type="ChEBI" id="CHEBI:30031"/>
        <dbReference type="ChEBI" id="CHEBI:30616"/>
        <dbReference type="ChEBI" id="CHEBI:43474"/>
        <dbReference type="ChEBI" id="CHEBI:57287"/>
        <dbReference type="ChEBI" id="CHEBI:57292"/>
        <dbReference type="ChEBI" id="CHEBI:456216"/>
        <dbReference type="EC" id="6.2.1.5"/>
    </reaction>
    <physiologicalReaction direction="right-to-left" evidence="1">
        <dbReference type="Rhea" id="RHEA:17663"/>
    </physiologicalReaction>
</comment>
<comment type="catalytic activity">
    <reaction evidence="1">
        <text>GTP + succinate + CoA = succinyl-CoA + GDP + phosphate</text>
        <dbReference type="Rhea" id="RHEA:22120"/>
        <dbReference type="ChEBI" id="CHEBI:30031"/>
        <dbReference type="ChEBI" id="CHEBI:37565"/>
        <dbReference type="ChEBI" id="CHEBI:43474"/>
        <dbReference type="ChEBI" id="CHEBI:57287"/>
        <dbReference type="ChEBI" id="CHEBI:57292"/>
        <dbReference type="ChEBI" id="CHEBI:58189"/>
    </reaction>
    <physiologicalReaction direction="right-to-left" evidence="1">
        <dbReference type="Rhea" id="RHEA:22122"/>
    </physiologicalReaction>
</comment>
<comment type="cofactor">
    <cofactor evidence="1">
        <name>Mg(2+)</name>
        <dbReference type="ChEBI" id="CHEBI:18420"/>
    </cofactor>
    <text evidence="1">Binds 1 Mg(2+) ion per subunit.</text>
</comment>
<comment type="pathway">
    <text evidence="1">Carbohydrate metabolism; tricarboxylic acid cycle; succinate from succinyl-CoA (ligase route): step 1/1.</text>
</comment>
<comment type="subunit">
    <text evidence="1">Heterotetramer of two alpha and two beta subunits.</text>
</comment>
<comment type="similarity">
    <text evidence="1">Belongs to the succinate/malate CoA ligase beta subunit family.</text>
</comment>
<name>SUCC_ECO8A</name>
<evidence type="ECO:0000255" key="1">
    <source>
        <dbReference type="HAMAP-Rule" id="MF_00558"/>
    </source>
</evidence>
<feature type="chain" id="PRO_1000129184" description="Succinate--CoA ligase [ADP-forming] subunit beta">
    <location>
        <begin position="1"/>
        <end position="388"/>
    </location>
</feature>
<feature type="domain" description="ATP-grasp" evidence="1">
    <location>
        <begin position="9"/>
        <end position="244"/>
    </location>
</feature>
<feature type="binding site" evidence="1">
    <location>
        <position position="46"/>
    </location>
    <ligand>
        <name>ATP</name>
        <dbReference type="ChEBI" id="CHEBI:30616"/>
    </ligand>
</feature>
<feature type="binding site" evidence="1">
    <location>
        <begin position="53"/>
        <end position="55"/>
    </location>
    <ligand>
        <name>ATP</name>
        <dbReference type="ChEBI" id="CHEBI:30616"/>
    </ligand>
</feature>
<feature type="binding site" evidence="1">
    <location>
        <position position="99"/>
    </location>
    <ligand>
        <name>ATP</name>
        <dbReference type="ChEBI" id="CHEBI:30616"/>
    </ligand>
</feature>
<feature type="binding site" evidence="1">
    <location>
        <position position="102"/>
    </location>
    <ligand>
        <name>ATP</name>
        <dbReference type="ChEBI" id="CHEBI:30616"/>
    </ligand>
</feature>
<feature type="binding site" evidence="1">
    <location>
        <position position="107"/>
    </location>
    <ligand>
        <name>ATP</name>
        <dbReference type="ChEBI" id="CHEBI:30616"/>
    </ligand>
</feature>
<feature type="binding site" evidence="1">
    <location>
        <position position="199"/>
    </location>
    <ligand>
        <name>Mg(2+)</name>
        <dbReference type="ChEBI" id="CHEBI:18420"/>
    </ligand>
</feature>
<feature type="binding site" evidence="1">
    <location>
        <position position="213"/>
    </location>
    <ligand>
        <name>Mg(2+)</name>
        <dbReference type="ChEBI" id="CHEBI:18420"/>
    </ligand>
</feature>
<feature type="binding site" evidence="1">
    <location>
        <position position="264"/>
    </location>
    <ligand>
        <name>substrate</name>
        <note>ligand shared with subunit alpha</note>
    </ligand>
</feature>
<feature type="binding site" evidence="1">
    <location>
        <begin position="321"/>
        <end position="323"/>
    </location>
    <ligand>
        <name>substrate</name>
        <note>ligand shared with subunit alpha</note>
    </ligand>
</feature>
<accession>B7M5P1</accession>
<protein>
    <recommendedName>
        <fullName evidence="1">Succinate--CoA ligase [ADP-forming] subunit beta</fullName>
        <ecNumber evidence="1">6.2.1.5</ecNumber>
    </recommendedName>
    <alternativeName>
        <fullName evidence="1">Succinyl-CoA synthetase subunit beta</fullName>
        <shortName evidence="1">SCS-beta</shortName>
    </alternativeName>
</protein>
<reference key="1">
    <citation type="journal article" date="2009" name="PLoS Genet.">
        <title>Organised genome dynamics in the Escherichia coli species results in highly diverse adaptive paths.</title>
        <authorList>
            <person name="Touchon M."/>
            <person name="Hoede C."/>
            <person name="Tenaillon O."/>
            <person name="Barbe V."/>
            <person name="Baeriswyl S."/>
            <person name="Bidet P."/>
            <person name="Bingen E."/>
            <person name="Bonacorsi S."/>
            <person name="Bouchier C."/>
            <person name="Bouvet O."/>
            <person name="Calteau A."/>
            <person name="Chiapello H."/>
            <person name="Clermont O."/>
            <person name="Cruveiller S."/>
            <person name="Danchin A."/>
            <person name="Diard M."/>
            <person name="Dossat C."/>
            <person name="Karoui M.E."/>
            <person name="Frapy E."/>
            <person name="Garry L."/>
            <person name="Ghigo J.M."/>
            <person name="Gilles A.M."/>
            <person name="Johnson J."/>
            <person name="Le Bouguenec C."/>
            <person name="Lescat M."/>
            <person name="Mangenot S."/>
            <person name="Martinez-Jehanne V."/>
            <person name="Matic I."/>
            <person name="Nassif X."/>
            <person name="Oztas S."/>
            <person name="Petit M.A."/>
            <person name="Pichon C."/>
            <person name="Rouy Z."/>
            <person name="Ruf C.S."/>
            <person name="Schneider D."/>
            <person name="Tourret J."/>
            <person name="Vacherie B."/>
            <person name="Vallenet D."/>
            <person name="Medigue C."/>
            <person name="Rocha E.P.C."/>
            <person name="Denamur E."/>
        </authorList>
    </citation>
    <scope>NUCLEOTIDE SEQUENCE [LARGE SCALE GENOMIC DNA]</scope>
    <source>
        <strain>IAI1</strain>
    </source>
</reference>
<keyword id="KW-0067">ATP-binding</keyword>
<keyword id="KW-0436">Ligase</keyword>
<keyword id="KW-0460">Magnesium</keyword>
<keyword id="KW-0479">Metal-binding</keyword>
<keyword id="KW-0547">Nucleotide-binding</keyword>
<keyword id="KW-0816">Tricarboxylic acid cycle</keyword>